<gene>
    <name evidence="1" type="primary">fliE</name>
    <name type="ordered locus">CA_C2163</name>
</gene>
<organism>
    <name type="scientific">Clostridium acetobutylicum (strain ATCC 824 / DSM 792 / JCM 1419 / IAM 19013 / LMG 5710 / NBRC 13948 / NRRL B-527 / VKM B-1787 / 2291 / W)</name>
    <dbReference type="NCBI Taxonomy" id="272562"/>
    <lineage>
        <taxon>Bacteria</taxon>
        <taxon>Bacillati</taxon>
        <taxon>Bacillota</taxon>
        <taxon>Clostridia</taxon>
        <taxon>Eubacteriales</taxon>
        <taxon>Clostridiaceae</taxon>
        <taxon>Clostridium</taxon>
    </lineage>
</organism>
<reference key="1">
    <citation type="journal article" date="2001" name="J. Bacteriol.">
        <title>Genome sequence and comparative analysis of the solvent-producing bacterium Clostridium acetobutylicum.</title>
        <authorList>
            <person name="Noelling J."/>
            <person name="Breton G."/>
            <person name="Omelchenko M.V."/>
            <person name="Makarova K.S."/>
            <person name="Zeng Q."/>
            <person name="Gibson R."/>
            <person name="Lee H.M."/>
            <person name="Dubois J."/>
            <person name="Qiu D."/>
            <person name="Hitti J."/>
            <person name="Wolf Y.I."/>
            <person name="Tatusov R.L."/>
            <person name="Sabathe F."/>
            <person name="Doucette-Stamm L.A."/>
            <person name="Soucaille P."/>
            <person name="Daly M.J."/>
            <person name="Bennett G.N."/>
            <person name="Koonin E.V."/>
            <person name="Smith D.R."/>
        </authorList>
    </citation>
    <scope>NUCLEOTIDE SEQUENCE [LARGE SCALE GENOMIC DNA]</scope>
    <source>
        <strain>ATCC 824 / DSM 792 / JCM 1419 / IAM 19013 / LMG 5710 / NBRC 13948 / NRRL B-527 / VKM B-1787 / 2291 / W</strain>
    </source>
</reference>
<feature type="chain" id="PRO_0000105541" description="Flagellar hook-basal body complex protein FliE">
    <location>
        <begin position="1"/>
        <end position="111"/>
    </location>
</feature>
<name>FLIE_CLOAB</name>
<keyword id="KW-0975">Bacterial flagellum</keyword>
<keyword id="KW-1185">Reference proteome</keyword>
<dbReference type="EMBL" id="AE001437">
    <property type="protein sequence ID" value="AAK80121.1"/>
    <property type="molecule type" value="Genomic_DNA"/>
</dbReference>
<dbReference type="PIR" id="F97166">
    <property type="entry name" value="F97166"/>
</dbReference>
<dbReference type="RefSeq" id="NP_348781.1">
    <property type="nucleotide sequence ID" value="NC_003030.1"/>
</dbReference>
<dbReference type="RefSeq" id="WP_010965462.1">
    <property type="nucleotide sequence ID" value="NC_003030.1"/>
</dbReference>
<dbReference type="SMR" id="Q97H50"/>
<dbReference type="STRING" id="272562.CA_C2163"/>
<dbReference type="GeneID" id="44998643"/>
<dbReference type="KEGG" id="cac:CA_C2163"/>
<dbReference type="PATRIC" id="fig|272562.8.peg.2365"/>
<dbReference type="eggNOG" id="COG1677">
    <property type="taxonomic scope" value="Bacteria"/>
</dbReference>
<dbReference type="HOGENOM" id="CLU_147249_3_4_9"/>
<dbReference type="OrthoDB" id="9812413at2"/>
<dbReference type="Proteomes" id="UP000000814">
    <property type="component" value="Chromosome"/>
</dbReference>
<dbReference type="GO" id="GO:0009425">
    <property type="term" value="C:bacterial-type flagellum basal body"/>
    <property type="evidence" value="ECO:0007669"/>
    <property type="project" value="UniProtKB-SubCell"/>
</dbReference>
<dbReference type="GO" id="GO:0003774">
    <property type="term" value="F:cytoskeletal motor activity"/>
    <property type="evidence" value="ECO:0007669"/>
    <property type="project" value="InterPro"/>
</dbReference>
<dbReference type="GO" id="GO:0005198">
    <property type="term" value="F:structural molecule activity"/>
    <property type="evidence" value="ECO:0007669"/>
    <property type="project" value="InterPro"/>
</dbReference>
<dbReference type="GO" id="GO:0071973">
    <property type="term" value="P:bacterial-type flagellum-dependent cell motility"/>
    <property type="evidence" value="ECO:0007669"/>
    <property type="project" value="InterPro"/>
</dbReference>
<dbReference type="HAMAP" id="MF_00724">
    <property type="entry name" value="FliE"/>
    <property type="match status" value="1"/>
</dbReference>
<dbReference type="InterPro" id="IPR001624">
    <property type="entry name" value="FliE"/>
</dbReference>
<dbReference type="NCBIfam" id="TIGR00205">
    <property type="entry name" value="fliE"/>
    <property type="match status" value="1"/>
</dbReference>
<dbReference type="PANTHER" id="PTHR34653">
    <property type="match status" value="1"/>
</dbReference>
<dbReference type="PANTHER" id="PTHR34653:SF1">
    <property type="entry name" value="FLAGELLAR HOOK-BASAL BODY COMPLEX PROTEIN FLIE"/>
    <property type="match status" value="1"/>
</dbReference>
<dbReference type="Pfam" id="PF02049">
    <property type="entry name" value="FliE"/>
    <property type="match status" value="1"/>
</dbReference>
<dbReference type="PRINTS" id="PR01006">
    <property type="entry name" value="FLGHOOKFLIE"/>
</dbReference>
<proteinExistence type="inferred from homology"/>
<comment type="subcellular location">
    <subcellularLocation>
        <location evidence="1">Bacterial flagellum basal body</location>
    </subcellularLocation>
</comment>
<comment type="similarity">
    <text evidence="1">Belongs to the FliE family.</text>
</comment>
<protein>
    <recommendedName>
        <fullName evidence="1">Flagellar hook-basal body complex protein FliE</fullName>
    </recommendedName>
</protein>
<evidence type="ECO:0000255" key="1">
    <source>
        <dbReference type="HAMAP-Rule" id="MF_00724"/>
    </source>
</evidence>
<sequence length="111" mass="12418">MRVDEFIPDSMKSILTKNTSNTNVINENQTSGDANGTNSVDFGNILNEKLQEVNDKQIDADNTTNAFIQGDDVDVHKVMLSTEEAKLSLELAVQMRNKLVDAYQELNRTQL</sequence>
<accession>Q97H50</accession>